<organism>
    <name type="scientific">Bradyrhizobium sp. (strain ORS 278)</name>
    <dbReference type="NCBI Taxonomy" id="114615"/>
    <lineage>
        <taxon>Bacteria</taxon>
        <taxon>Pseudomonadati</taxon>
        <taxon>Pseudomonadota</taxon>
        <taxon>Alphaproteobacteria</taxon>
        <taxon>Hyphomicrobiales</taxon>
        <taxon>Nitrobacteraceae</taxon>
        <taxon>Bradyrhizobium</taxon>
    </lineage>
</organism>
<feature type="chain" id="PRO_1000082030" description="Succinate--CoA ligase [ADP-forming] subunit beta">
    <location>
        <begin position="1"/>
        <end position="398"/>
    </location>
</feature>
<feature type="domain" description="ATP-grasp" evidence="1">
    <location>
        <begin position="9"/>
        <end position="254"/>
    </location>
</feature>
<feature type="binding site" evidence="1">
    <location>
        <position position="46"/>
    </location>
    <ligand>
        <name>ATP</name>
        <dbReference type="ChEBI" id="CHEBI:30616"/>
    </ligand>
</feature>
<feature type="binding site" evidence="1">
    <location>
        <begin position="53"/>
        <end position="55"/>
    </location>
    <ligand>
        <name>ATP</name>
        <dbReference type="ChEBI" id="CHEBI:30616"/>
    </ligand>
</feature>
<feature type="binding site" evidence="1">
    <location>
        <position position="109"/>
    </location>
    <ligand>
        <name>ATP</name>
        <dbReference type="ChEBI" id="CHEBI:30616"/>
    </ligand>
</feature>
<feature type="binding site" evidence="1">
    <location>
        <position position="112"/>
    </location>
    <ligand>
        <name>ATP</name>
        <dbReference type="ChEBI" id="CHEBI:30616"/>
    </ligand>
</feature>
<feature type="binding site" evidence="1">
    <location>
        <position position="117"/>
    </location>
    <ligand>
        <name>ATP</name>
        <dbReference type="ChEBI" id="CHEBI:30616"/>
    </ligand>
</feature>
<feature type="binding site" evidence="1">
    <location>
        <position position="209"/>
    </location>
    <ligand>
        <name>Mg(2+)</name>
        <dbReference type="ChEBI" id="CHEBI:18420"/>
    </ligand>
</feature>
<feature type="binding site" evidence="1">
    <location>
        <position position="223"/>
    </location>
    <ligand>
        <name>Mg(2+)</name>
        <dbReference type="ChEBI" id="CHEBI:18420"/>
    </ligand>
</feature>
<feature type="binding site" evidence="1">
    <location>
        <position position="274"/>
    </location>
    <ligand>
        <name>substrate</name>
        <note>ligand shared with subunit alpha</note>
    </ligand>
</feature>
<feature type="binding site" evidence="1">
    <location>
        <begin position="331"/>
        <end position="333"/>
    </location>
    <ligand>
        <name>substrate</name>
        <note>ligand shared with subunit alpha</note>
    </ligand>
</feature>
<accession>A4YKC6</accession>
<sequence length="398" mass="42191">MNIHEYQAKALLHEFGVPISKGVPVLRPEDADAAAKTLGGPVWVVKSQIHAGGRGKGKFKEASAGDKGGVRLAKSIDEVNTFARQMLGATLVTVQTGPDGKQVNRLYIEDGSDIDKEFYLSLLVDRETSKVAFVVSTEGGVNIEDVAHETPEKIVTFSVDPATGVMGHHGRAVAKALKLSGDLAKQAEKLTTQLYNAFVAKDMAMLEINPLVVTKQGQLRVLDAKVSFDSNALFKHPEVVALRDETEEDAKEIEASKYDLNYVALDGTIGCMVNGAGLAMATMDIIKLYGMEPANFLDVGGGASKEKVAAAFKIITADPNVKGILVNIFGGIMKCDVIAEGVVAAVKEVGLKVPLVVRLEGTNVDLGKKIISESGLNVLPADNLDDAAQKIVKAVKGG</sequence>
<name>SUCC_BRASO</name>
<proteinExistence type="inferred from homology"/>
<evidence type="ECO:0000255" key="1">
    <source>
        <dbReference type="HAMAP-Rule" id="MF_00558"/>
    </source>
</evidence>
<protein>
    <recommendedName>
        <fullName evidence="1">Succinate--CoA ligase [ADP-forming] subunit beta</fullName>
        <ecNumber evidence="1">6.2.1.5</ecNumber>
    </recommendedName>
    <alternativeName>
        <fullName evidence="1">Succinyl-CoA synthetase subunit beta</fullName>
        <shortName evidence="1">SCS-beta</shortName>
    </alternativeName>
</protein>
<keyword id="KW-0067">ATP-binding</keyword>
<keyword id="KW-0436">Ligase</keyword>
<keyword id="KW-0460">Magnesium</keyword>
<keyword id="KW-0479">Metal-binding</keyword>
<keyword id="KW-0547">Nucleotide-binding</keyword>
<keyword id="KW-1185">Reference proteome</keyword>
<keyword id="KW-0816">Tricarboxylic acid cycle</keyword>
<reference key="1">
    <citation type="journal article" date="2007" name="Science">
        <title>Legumes symbioses: absence of nod genes in photosynthetic bradyrhizobia.</title>
        <authorList>
            <person name="Giraud E."/>
            <person name="Moulin L."/>
            <person name="Vallenet D."/>
            <person name="Barbe V."/>
            <person name="Cytryn E."/>
            <person name="Avarre J.-C."/>
            <person name="Jaubert M."/>
            <person name="Simon D."/>
            <person name="Cartieaux F."/>
            <person name="Prin Y."/>
            <person name="Bena G."/>
            <person name="Hannibal L."/>
            <person name="Fardoux J."/>
            <person name="Kojadinovic M."/>
            <person name="Vuillet L."/>
            <person name="Lajus A."/>
            <person name="Cruveiller S."/>
            <person name="Rouy Z."/>
            <person name="Mangenot S."/>
            <person name="Segurens B."/>
            <person name="Dossat C."/>
            <person name="Franck W.L."/>
            <person name="Chang W.-S."/>
            <person name="Saunders E."/>
            <person name="Bruce D."/>
            <person name="Richardson P."/>
            <person name="Normand P."/>
            <person name="Dreyfus B."/>
            <person name="Pignol D."/>
            <person name="Stacey G."/>
            <person name="Emerich D."/>
            <person name="Vermeglio A."/>
            <person name="Medigue C."/>
            <person name="Sadowsky M."/>
        </authorList>
    </citation>
    <scope>NUCLEOTIDE SEQUENCE [LARGE SCALE GENOMIC DNA]</scope>
    <source>
        <strain>ORS 278</strain>
    </source>
</reference>
<comment type="function">
    <text evidence="1">Succinyl-CoA synthetase functions in the citric acid cycle (TCA), coupling the hydrolysis of succinyl-CoA to the synthesis of either ATP or GTP and thus represents the only step of substrate-level phosphorylation in the TCA. The beta subunit provides nucleotide specificity of the enzyme and binds the substrate succinate, while the binding sites for coenzyme A and phosphate are found in the alpha subunit.</text>
</comment>
<comment type="catalytic activity">
    <reaction evidence="1">
        <text>succinate + ATP + CoA = succinyl-CoA + ADP + phosphate</text>
        <dbReference type="Rhea" id="RHEA:17661"/>
        <dbReference type="ChEBI" id="CHEBI:30031"/>
        <dbReference type="ChEBI" id="CHEBI:30616"/>
        <dbReference type="ChEBI" id="CHEBI:43474"/>
        <dbReference type="ChEBI" id="CHEBI:57287"/>
        <dbReference type="ChEBI" id="CHEBI:57292"/>
        <dbReference type="ChEBI" id="CHEBI:456216"/>
        <dbReference type="EC" id="6.2.1.5"/>
    </reaction>
    <physiologicalReaction direction="right-to-left" evidence="1">
        <dbReference type="Rhea" id="RHEA:17663"/>
    </physiologicalReaction>
</comment>
<comment type="catalytic activity">
    <reaction evidence="1">
        <text>GTP + succinate + CoA = succinyl-CoA + GDP + phosphate</text>
        <dbReference type="Rhea" id="RHEA:22120"/>
        <dbReference type="ChEBI" id="CHEBI:30031"/>
        <dbReference type="ChEBI" id="CHEBI:37565"/>
        <dbReference type="ChEBI" id="CHEBI:43474"/>
        <dbReference type="ChEBI" id="CHEBI:57287"/>
        <dbReference type="ChEBI" id="CHEBI:57292"/>
        <dbReference type="ChEBI" id="CHEBI:58189"/>
    </reaction>
    <physiologicalReaction direction="right-to-left" evidence="1">
        <dbReference type="Rhea" id="RHEA:22122"/>
    </physiologicalReaction>
</comment>
<comment type="cofactor">
    <cofactor evidence="1">
        <name>Mg(2+)</name>
        <dbReference type="ChEBI" id="CHEBI:18420"/>
    </cofactor>
    <text evidence="1">Binds 1 Mg(2+) ion per subunit.</text>
</comment>
<comment type="pathway">
    <text evidence="1">Carbohydrate metabolism; tricarboxylic acid cycle; succinate from succinyl-CoA (ligase route): step 1/1.</text>
</comment>
<comment type="subunit">
    <text evidence="1">Heterotetramer of two alpha and two beta subunits.</text>
</comment>
<comment type="similarity">
    <text evidence="1">Belongs to the succinate/malate CoA ligase beta subunit family.</text>
</comment>
<dbReference type="EC" id="6.2.1.5" evidence="1"/>
<dbReference type="EMBL" id="CU234118">
    <property type="protein sequence ID" value="CAL74352.1"/>
    <property type="molecule type" value="Genomic_DNA"/>
</dbReference>
<dbReference type="RefSeq" id="WP_011923632.1">
    <property type="nucleotide sequence ID" value="NC_009445.1"/>
</dbReference>
<dbReference type="SMR" id="A4YKC6"/>
<dbReference type="STRING" id="114615.BRADO0404"/>
<dbReference type="KEGG" id="bra:BRADO0404"/>
<dbReference type="eggNOG" id="COG0045">
    <property type="taxonomic scope" value="Bacteria"/>
</dbReference>
<dbReference type="HOGENOM" id="CLU_037430_0_2_5"/>
<dbReference type="OrthoDB" id="9802602at2"/>
<dbReference type="UniPathway" id="UPA00223">
    <property type="reaction ID" value="UER00999"/>
</dbReference>
<dbReference type="Proteomes" id="UP000001994">
    <property type="component" value="Chromosome"/>
</dbReference>
<dbReference type="GO" id="GO:0005829">
    <property type="term" value="C:cytosol"/>
    <property type="evidence" value="ECO:0007669"/>
    <property type="project" value="TreeGrafter"/>
</dbReference>
<dbReference type="GO" id="GO:0042709">
    <property type="term" value="C:succinate-CoA ligase complex"/>
    <property type="evidence" value="ECO:0007669"/>
    <property type="project" value="TreeGrafter"/>
</dbReference>
<dbReference type="GO" id="GO:0005524">
    <property type="term" value="F:ATP binding"/>
    <property type="evidence" value="ECO:0007669"/>
    <property type="project" value="UniProtKB-UniRule"/>
</dbReference>
<dbReference type="GO" id="GO:0000287">
    <property type="term" value="F:magnesium ion binding"/>
    <property type="evidence" value="ECO:0007669"/>
    <property type="project" value="UniProtKB-UniRule"/>
</dbReference>
<dbReference type="GO" id="GO:0004775">
    <property type="term" value="F:succinate-CoA ligase (ADP-forming) activity"/>
    <property type="evidence" value="ECO:0007669"/>
    <property type="project" value="UniProtKB-UniRule"/>
</dbReference>
<dbReference type="GO" id="GO:0004776">
    <property type="term" value="F:succinate-CoA ligase (GDP-forming) activity"/>
    <property type="evidence" value="ECO:0007669"/>
    <property type="project" value="RHEA"/>
</dbReference>
<dbReference type="GO" id="GO:0006104">
    <property type="term" value="P:succinyl-CoA metabolic process"/>
    <property type="evidence" value="ECO:0007669"/>
    <property type="project" value="TreeGrafter"/>
</dbReference>
<dbReference type="GO" id="GO:0006099">
    <property type="term" value="P:tricarboxylic acid cycle"/>
    <property type="evidence" value="ECO:0007669"/>
    <property type="project" value="UniProtKB-UniRule"/>
</dbReference>
<dbReference type="FunFam" id="3.30.1490.20:FF:000002">
    <property type="entry name" value="Succinate--CoA ligase [ADP-forming] subunit beta"/>
    <property type="match status" value="1"/>
</dbReference>
<dbReference type="FunFam" id="3.30.470.20:FF:000002">
    <property type="entry name" value="Succinate--CoA ligase [ADP-forming] subunit beta"/>
    <property type="match status" value="1"/>
</dbReference>
<dbReference type="FunFam" id="3.40.50.261:FF:000001">
    <property type="entry name" value="Succinate--CoA ligase [ADP-forming] subunit beta"/>
    <property type="match status" value="1"/>
</dbReference>
<dbReference type="Gene3D" id="3.30.1490.20">
    <property type="entry name" value="ATP-grasp fold, A domain"/>
    <property type="match status" value="1"/>
</dbReference>
<dbReference type="Gene3D" id="3.30.470.20">
    <property type="entry name" value="ATP-grasp fold, B domain"/>
    <property type="match status" value="1"/>
</dbReference>
<dbReference type="Gene3D" id="3.40.50.261">
    <property type="entry name" value="Succinyl-CoA synthetase domains"/>
    <property type="match status" value="1"/>
</dbReference>
<dbReference type="HAMAP" id="MF_00558">
    <property type="entry name" value="Succ_CoA_beta"/>
    <property type="match status" value="1"/>
</dbReference>
<dbReference type="InterPro" id="IPR011761">
    <property type="entry name" value="ATP-grasp"/>
</dbReference>
<dbReference type="InterPro" id="IPR013650">
    <property type="entry name" value="ATP-grasp_succ-CoA_synth-type"/>
</dbReference>
<dbReference type="InterPro" id="IPR013815">
    <property type="entry name" value="ATP_grasp_subdomain_1"/>
</dbReference>
<dbReference type="InterPro" id="IPR005811">
    <property type="entry name" value="SUCC_ACL_C"/>
</dbReference>
<dbReference type="InterPro" id="IPR005809">
    <property type="entry name" value="Succ_CoA_ligase-like_bsu"/>
</dbReference>
<dbReference type="InterPro" id="IPR016102">
    <property type="entry name" value="Succinyl-CoA_synth-like"/>
</dbReference>
<dbReference type="NCBIfam" id="NF001913">
    <property type="entry name" value="PRK00696.1"/>
    <property type="match status" value="1"/>
</dbReference>
<dbReference type="NCBIfam" id="TIGR01016">
    <property type="entry name" value="sucCoAbeta"/>
    <property type="match status" value="1"/>
</dbReference>
<dbReference type="PANTHER" id="PTHR11815:SF10">
    <property type="entry name" value="SUCCINATE--COA LIGASE [GDP-FORMING] SUBUNIT BETA, MITOCHONDRIAL"/>
    <property type="match status" value="1"/>
</dbReference>
<dbReference type="PANTHER" id="PTHR11815">
    <property type="entry name" value="SUCCINYL-COA SYNTHETASE BETA CHAIN"/>
    <property type="match status" value="1"/>
</dbReference>
<dbReference type="Pfam" id="PF08442">
    <property type="entry name" value="ATP-grasp_2"/>
    <property type="match status" value="1"/>
</dbReference>
<dbReference type="Pfam" id="PF00549">
    <property type="entry name" value="Ligase_CoA"/>
    <property type="match status" value="1"/>
</dbReference>
<dbReference type="PIRSF" id="PIRSF001554">
    <property type="entry name" value="SucCS_beta"/>
    <property type="match status" value="1"/>
</dbReference>
<dbReference type="SUPFAM" id="SSF56059">
    <property type="entry name" value="Glutathione synthetase ATP-binding domain-like"/>
    <property type="match status" value="1"/>
</dbReference>
<dbReference type="SUPFAM" id="SSF52210">
    <property type="entry name" value="Succinyl-CoA synthetase domains"/>
    <property type="match status" value="1"/>
</dbReference>
<dbReference type="PROSITE" id="PS50975">
    <property type="entry name" value="ATP_GRASP"/>
    <property type="match status" value="1"/>
</dbReference>
<gene>
    <name evidence="1" type="primary">sucC</name>
    <name type="ordered locus">BRADO0404</name>
</gene>